<name>3MGH_NATTJ</name>
<accession>B2A7A8</accession>
<gene>
    <name type="ordered locus">Nther_0710</name>
</gene>
<evidence type="ECO:0000255" key="1">
    <source>
        <dbReference type="HAMAP-Rule" id="MF_00527"/>
    </source>
</evidence>
<comment type="similarity">
    <text evidence="1">Belongs to the DNA glycosylase MPG family.</text>
</comment>
<reference key="1">
    <citation type="submission" date="2008-04" db="EMBL/GenBank/DDBJ databases">
        <title>Complete sequence of chromosome of Natranaerobius thermophilus JW/NM-WN-LF.</title>
        <authorList>
            <consortium name="US DOE Joint Genome Institute"/>
            <person name="Copeland A."/>
            <person name="Lucas S."/>
            <person name="Lapidus A."/>
            <person name="Glavina del Rio T."/>
            <person name="Dalin E."/>
            <person name="Tice H."/>
            <person name="Bruce D."/>
            <person name="Goodwin L."/>
            <person name="Pitluck S."/>
            <person name="Chertkov O."/>
            <person name="Brettin T."/>
            <person name="Detter J.C."/>
            <person name="Han C."/>
            <person name="Kuske C.R."/>
            <person name="Schmutz J."/>
            <person name="Larimer F."/>
            <person name="Land M."/>
            <person name="Hauser L."/>
            <person name="Kyrpides N."/>
            <person name="Lykidis A."/>
            <person name="Mesbah N.M."/>
            <person name="Wiegel J."/>
        </authorList>
    </citation>
    <scope>NUCLEOTIDE SEQUENCE [LARGE SCALE GENOMIC DNA]</scope>
    <source>
        <strain>ATCC BAA-1301 / DSM 18059 / JW/NM-WN-LF</strain>
    </source>
</reference>
<keyword id="KW-0227">DNA damage</keyword>
<keyword id="KW-0234">DNA repair</keyword>
<keyword id="KW-0378">Hydrolase</keyword>
<keyword id="KW-1185">Reference proteome</keyword>
<dbReference type="EC" id="3.2.2.-" evidence="1"/>
<dbReference type="EMBL" id="CP001034">
    <property type="protein sequence ID" value="ACB84302.1"/>
    <property type="molecule type" value="Genomic_DNA"/>
</dbReference>
<dbReference type="RefSeq" id="WP_012447186.1">
    <property type="nucleotide sequence ID" value="NC_010718.1"/>
</dbReference>
<dbReference type="SMR" id="B2A7A8"/>
<dbReference type="FunCoup" id="B2A7A8">
    <property type="interactions" value="84"/>
</dbReference>
<dbReference type="STRING" id="457570.Nther_0710"/>
<dbReference type="KEGG" id="nth:Nther_0710"/>
<dbReference type="eggNOG" id="COG2094">
    <property type="taxonomic scope" value="Bacteria"/>
</dbReference>
<dbReference type="HOGENOM" id="CLU_060471_0_2_9"/>
<dbReference type="InParanoid" id="B2A7A8"/>
<dbReference type="OrthoDB" id="9794313at2"/>
<dbReference type="Proteomes" id="UP000001683">
    <property type="component" value="Chromosome"/>
</dbReference>
<dbReference type="GO" id="GO:0003905">
    <property type="term" value="F:alkylbase DNA N-glycosylase activity"/>
    <property type="evidence" value="ECO:0007669"/>
    <property type="project" value="InterPro"/>
</dbReference>
<dbReference type="GO" id="GO:0003677">
    <property type="term" value="F:DNA binding"/>
    <property type="evidence" value="ECO:0007669"/>
    <property type="project" value="InterPro"/>
</dbReference>
<dbReference type="GO" id="GO:0006284">
    <property type="term" value="P:base-excision repair"/>
    <property type="evidence" value="ECO:0007669"/>
    <property type="project" value="InterPro"/>
</dbReference>
<dbReference type="CDD" id="cd00540">
    <property type="entry name" value="AAG"/>
    <property type="match status" value="1"/>
</dbReference>
<dbReference type="FunFam" id="3.10.300.10:FF:000001">
    <property type="entry name" value="Putative 3-methyladenine DNA glycosylase"/>
    <property type="match status" value="1"/>
</dbReference>
<dbReference type="Gene3D" id="3.10.300.10">
    <property type="entry name" value="Methylpurine-DNA glycosylase (MPG)"/>
    <property type="match status" value="1"/>
</dbReference>
<dbReference type="HAMAP" id="MF_00527">
    <property type="entry name" value="3MGH"/>
    <property type="match status" value="1"/>
</dbReference>
<dbReference type="InterPro" id="IPR011034">
    <property type="entry name" value="Formyl_transferase-like_C_sf"/>
</dbReference>
<dbReference type="InterPro" id="IPR003180">
    <property type="entry name" value="MPG"/>
</dbReference>
<dbReference type="InterPro" id="IPR036995">
    <property type="entry name" value="MPG_sf"/>
</dbReference>
<dbReference type="NCBIfam" id="TIGR00567">
    <property type="entry name" value="3mg"/>
    <property type="match status" value="1"/>
</dbReference>
<dbReference type="PANTHER" id="PTHR10429">
    <property type="entry name" value="DNA-3-METHYLADENINE GLYCOSYLASE"/>
    <property type="match status" value="1"/>
</dbReference>
<dbReference type="PANTHER" id="PTHR10429:SF0">
    <property type="entry name" value="DNA-3-METHYLADENINE GLYCOSYLASE"/>
    <property type="match status" value="1"/>
</dbReference>
<dbReference type="Pfam" id="PF02245">
    <property type="entry name" value="Pur_DNA_glyco"/>
    <property type="match status" value="1"/>
</dbReference>
<dbReference type="SUPFAM" id="SSF50486">
    <property type="entry name" value="FMT C-terminal domain-like"/>
    <property type="match status" value="1"/>
</dbReference>
<sequence>MKLDYEFFQRDAVSVAKDLIGKLLVRNLNGEELICRIVDTEAYCGPEDKGCHAYQNKRTNRTEVMYKSGGYVYVYLIYGLHYCFNVVVSKQDRPEAVFIRAGEPISGLKTMRDNRNIKSNKKTELTNGPGKLSQAMAIDKSLNGQDLVASKEIYLRHACDSQSYQIIPAKRVNIDYAEEYTDKLWRFYIRDNPFVSIN</sequence>
<protein>
    <recommendedName>
        <fullName evidence="1">Putative 3-methyladenine DNA glycosylase</fullName>
        <ecNumber evidence="1">3.2.2.-</ecNumber>
    </recommendedName>
</protein>
<feature type="chain" id="PRO_1000127760" description="Putative 3-methyladenine DNA glycosylase">
    <location>
        <begin position="1"/>
        <end position="198"/>
    </location>
</feature>
<organism>
    <name type="scientific">Natranaerobius thermophilus (strain ATCC BAA-1301 / DSM 18059 / JW/NM-WN-LF)</name>
    <dbReference type="NCBI Taxonomy" id="457570"/>
    <lineage>
        <taxon>Bacteria</taxon>
        <taxon>Bacillati</taxon>
        <taxon>Bacillota</taxon>
        <taxon>Clostridia</taxon>
        <taxon>Natranaerobiales</taxon>
        <taxon>Natranaerobiaceae</taxon>
        <taxon>Natranaerobius</taxon>
    </lineage>
</organism>
<proteinExistence type="inferred from homology"/>